<sequence length="571" mass="63723">MTQPGQTTTTSHEAIDAFKRIVGDEHVLTSERATMPFSKGYRFGGGPVFAVVRPGTLVEMWRALQVSVDNNLIVIPQASNTGLTGGSGPGFQDYDRPIVIISTHRIDEVHLINDAREAISLAGTPLTHLTDALAKHQREPHSVIGSTSIGASVIGGIANNSGGSQIRKGPAFTREAIFARVNDDGKVELVNHLGISLGDDPEVALDRLQRGEWSPEDVTPAPEDSNETEYAEHLRKIVPSPARYNANPEYLFEASGSAGKLMVFAVRTRTFPREVHPTVFYIGTNNTHELEEIRRLFLEADMPLPISGEYMGRSAFDLAEKYGKDTFVFLKFMSPALQTRMFSFKTWANGLFSKIPGIGPTFADTVSQAMFSVLPNQLPKRMMEYRNRFEHHLLLTVSESQKAASEKMLKEFFAEPEHTGEFFICTSDEEKSASLNRFGAASAATRYAALKRRHIAGLIPIDVALRRDDWNWLEVLPEEIDDQLEVKAYYGHFFCHVMHQDYVAKQGVDLEALHDRIQHLLEERGAKLPAEHNYGRIYKLPESMEEHFKELDPTNTFNAGIGGTSPHKDWA</sequence>
<feature type="chain" id="PRO_0000441706" description="Quinone-dependent D-lactate dehydrogenase">
    <location>
        <begin position="1"/>
        <end position="571"/>
    </location>
</feature>
<feature type="domain" description="FAD-binding PCMH-type" evidence="1">
    <location>
        <begin position="44"/>
        <end position="273"/>
    </location>
</feature>
<feature type="binding site" evidence="1">
    <location>
        <begin position="78"/>
        <end position="82"/>
    </location>
    <ligand>
        <name>FAD</name>
        <dbReference type="ChEBI" id="CHEBI:57692"/>
    </ligand>
</feature>
<feature type="binding site" evidence="1">
    <location>
        <begin position="86"/>
        <end position="87"/>
    </location>
    <ligand>
        <name>FAD</name>
        <dbReference type="ChEBI" id="CHEBI:57692"/>
    </ligand>
</feature>
<feature type="binding site" evidence="1">
    <location>
        <position position="145"/>
    </location>
    <ligand>
        <name>FAD</name>
        <dbReference type="ChEBI" id="CHEBI:57692"/>
    </ligand>
</feature>
<feature type="binding site" evidence="1">
    <location>
        <position position="152"/>
    </location>
    <ligand>
        <name>FAD</name>
        <dbReference type="ChEBI" id="CHEBI:57692"/>
    </ligand>
</feature>
<feature type="binding site" evidence="1">
    <location>
        <position position="162"/>
    </location>
    <ligand>
        <name>FAD</name>
        <dbReference type="ChEBI" id="CHEBI:57692"/>
    </ligand>
</feature>
<feature type="binding site" evidence="1">
    <location>
        <position position="263"/>
    </location>
    <ligand>
        <name>FAD</name>
        <dbReference type="ChEBI" id="CHEBI:57692"/>
    </ligand>
</feature>
<evidence type="ECO:0000255" key="1">
    <source>
        <dbReference type="HAMAP-Rule" id="MF_02092"/>
    </source>
</evidence>
<evidence type="ECO:0000269" key="2">
    <source>
    </source>
</evidence>
<evidence type="ECO:0000303" key="3">
    <source>
    </source>
</evidence>
<evidence type="ECO:0000305" key="4"/>
<evidence type="ECO:0000312" key="5">
    <source>
        <dbReference type="EMBL" id="BAB98294.1"/>
    </source>
</evidence>
<dbReference type="EC" id="1.1.5.12" evidence="1 2"/>
<dbReference type="EMBL" id="BA000036">
    <property type="protein sequence ID" value="BAB98294.1"/>
    <property type="molecule type" value="Genomic_DNA"/>
</dbReference>
<dbReference type="RefSeq" id="NP_600129.1">
    <property type="nucleotide sequence ID" value="NC_003450.3"/>
</dbReference>
<dbReference type="RefSeq" id="WP_011013960.1">
    <property type="nucleotide sequence ID" value="NC_006958.1"/>
</dbReference>
<dbReference type="SMR" id="Q8NRY8"/>
<dbReference type="STRING" id="196627.cg1027"/>
<dbReference type="GeneID" id="1018894"/>
<dbReference type="KEGG" id="cgb:cg1027"/>
<dbReference type="KEGG" id="cgl:Cgl0901"/>
<dbReference type="PATRIC" id="fig|196627.13.peg.886"/>
<dbReference type="eggNOG" id="COG0277">
    <property type="taxonomic scope" value="Bacteria"/>
</dbReference>
<dbReference type="HOGENOM" id="CLU_034094_0_0_11"/>
<dbReference type="OrthoDB" id="9772552at2"/>
<dbReference type="BioCyc" id="CORYNE:G18NG-10471-MONOMER"/>
<dbReference type="BRENDA" id="1.1.5.10">
    <property type="organism ID" value="960"/>
</dbReference>
<dbReference type="Proteomes" id="UP000000582">
    <property type="component" value="Chromosome"/>
</dbReference>
<dbReference type="GO" id="GO:0031234">
    <property type="term" value="C:extrinsic component of cytoplasmic side of plasma membrane"/>
    <property type="evidence" value="ECO:0007669"/>
    <property type="project" value="UniProtKB-UniRule"/>
</dbReference>
<dbReference type="GO" id="GO:0004458">
    <property type="term" value="F:D-lactate dehydrogenase (cytochrome) activity"/>
    <property type="evidence" value="ECO:0007669"/>
    <property type="project" value="UniProtKB-UniRule"/>
</dbReference>
<dbReference type="GO" id="GO:0102029">
    <property type="term" value="F:D-lactate dehydrogenase (quinone) activity"/>
    <property type="evidence" value="ECO:0007669"/>
    <property type="project" value="UniProtKB-EC"/>
</dbReference>
<dbReference type="GO" id="GO:0071949">
    <property type="term" value="F:FAD binding"/>
    <property type="evidence" value="ECO:0007669"/>
    <property type="project" value="InterPro"/>
</dbReference>
<dbReference type="GO" id="GO:0048038">
    <property type="term" value="F:quinone binding"/>
    <property type="evidence" value="ECO:0007669"/>
    <property type="project" value="UniProtKB-KW"/>
</dbReference>
<dbReference type="GO" id="GO:0006089">
    <property type="term" value="P:lactate metabolic process"/>
    <property type="evidence" value="ECO:0007669"/>
    <property type="project" value="UniProtKB-UniRule"/>
</dbReference>
<dbReference type="GO" id="GO:0022904">
    <property type="term" value="P:respiratory electron transport chain"/>
    <property type="evidence" value="ECO:0007669"/>
    <property type="project" value="InterPro"/>
</dbReference>
<dbReference type="GO" id="GO:0055085">
    <property type="term" value="P:transmembrane transport"/>
    <property type="evidence" value="ECO:0007669"/>
    <property type="project" value="InterPro"/>
</dbReference>
<dbReference type="Gene3D" id="3.30.465.10">
    <property type="match status" value="1"/>
</dbReference>
<dbReference type="Gene3D" id="3.30.70.610">
    <property type="entry name" value="D-lactate dehydrogenase, cap domain, subdomain 1"/>
    <property type="match status" value="2"/>
</dbReference>
<dbReference type="Gene3D" id="3.30.1370.20">
    <property type="entry name" value="D-lactate dehydrogenase, cap domain, subdomain 2"/>
    <property type="match status" value="1"/>
</dbReference>
<dbReference type="Gene3D" id="3.30.43.10">
    <property type="entry name" value="Uridine Diphospho-n-acetylenolpyruvylglucosamine Reductase, domain 2"/>
    <property type="match status" value="1"/>
</dbReference>
<dbReference type="HAMAP" id="MF_02092">
    <property type="entry name" value="DLDH_Dld"/>
    <property type="match status" value="1"/>
</dbReference>
<dbReference type="InterPro" id="IPR016172">
    <property type="entry name" value="D-lactate_DH_C-sub1"/>
</dbReference>
<dbReference type="InterPro" id="IPR016173">
    <property type="entry name" value="D-lactate_DH_C-sub2"/>
</dbReference>
<dbReference type="InterPro" id="IPR012256">
    <property type="entry name" value="D_lactate_DH"/>
</dbReference>
<dbReference type="InterPro" id="IPR016166">
    <property type="entry name" value="FAD-bd_PCMH"/>
</dbReference>
<dbReference type="InterPro" id="IPR036318">
    <property type="entry name" value="FAD-bd_PCMH-like_sf"/>
</dbReference>
<dbReference type="InterPro" id="IPR016167">
    <property type="entry name" value="FAD-bd_PCMH_sub1"/>
</dbReference>
<dbReference type="InterPro" id="IPR016169">
    <property type="entry name" value="FAD-bd_PCMH_sub2"/>
</dbReference>
<dbReference type="InterPro" id="IPR016164">
    <property type="entry name" value="FAD-linked_Oxase-like_C"/>
</dbReference>
<dbReference type="InterPro" id="IPR051264">
    <property type="entry name" value="FAD-oxidored/transferase_4"/>
</dbReference>
<dbReference type="InterPro" id="IPR015409">
    <property type="entry name" value="Lactate_DH_C"/>
</dbReference>
<dbReference type="InterPro" id="IPR006094">
    <property type="entry name" value="Oxid_FAD_bind_N"/>
</dbReference>
<dbReference type="NCBIfam" id="NF008387">
    <property type="entry name" value="PRK11183.1"/>
    <property type="match status" value="1"/>
</dbReference>
<dbReference type="PANTHER" id="PTHR43716">
    <property type="entry name" value="D-2-HYDROXYGLUTARATE DEHYDROGENASE, MITOCHONDRIAL"/>
    <property type="match status" value="1"/>
</dbReference>
<dbReference type="PANTHER" id="PTHR43716:SF1">
    <property type="entry name" value="D-2-HYDROXYGLUTARATE DEHYDROGENASE, MITOCHONDRIAL"/>
    <property type="match status" value="1"/>
</dbReference>
<dbReference type="Pfam" id="PF01565">
    <property type="entry name" value="FAD_binding_4"/>
    <property type="match status" value="1"/>
</dbReference>
<dbReference type="Pfam" id="PF09330">
    <property type="entry name" value="Lact-deh-memb"/>
    <property type="match status" value="1"/>
</dbReference>
<dbReference type="PIRSF" id="PIRSF000101">
    <property type="entry name" value="D-lactate_dh"/>
    <property type="match status" value="1"/>
</dbReference>
<dbReference type="SUPFAM" id="SSF56176">
    <property type="entry name" value="FAD-binding/transporter-associated domain-like"/>
    <property type="match status" value="1"/>
</dbReference>
<dbReference type="SUPFAM" id="SSF55103">
    <property type="entry name" value="FAD-linked oxidases, C-terminal domain"/>
    <property type="match status" value="1"/>
</dbReference>
<dbReference type="PROSITE" id="PS51387">
    <property type="entry name" value="FAD_PCMH"/>
    <property type="match status" value="1"/>
</dbReference>
<accession>Q8NRY8</accession>
<accession>Q6M6P4</accession>
<protein>
    <recommendedName>
        <fullName evidence="1 3">Quinone-dependent D-lactate dehydrogenase</fullName>
        <ecNumber evidence="1 2">1.1.5.12</ecNumber>
    </recommendedName>
    <alternativeName>
        <fullName evidence="1 3">D-lactate dehydrogenase</fullName>
        <shortName evidence="1">D-LDH</shortName>
    </alternativeName>
</protein>
<reference key="1">
    <citation type="journal article" date="2003" name="Appl. Microbiol. Biotechnol.">
        <title>The Corynebacterium glutamicum genome: features and impacts on biotechnological processes.</title>
        <authorList>
            <person name="Ikeda M."/>
            <person name="Nakagawa S."/>
        </authorList>
    </citation>
    <scope>NUCLEOTIDE SEQUENCE [LARGE SCALE GENOMIC DNA]</scope>
    <source>
        <strain>ATCC 13032 / DSM 20300 / JCM 1318 / BCRC 11384 / CCUG 27702 / LMG 3730 / NBRC 12168 / NCIMB 10025 / NRRL B-2784 / 534</strain>
    </source>
</reference>
<reference key="2">
    <citation type="journal article" date="2010" name="BMC Microbiol.">
        <title>Quinone-dependent D-lactate dehydrogenase Dld (Cg1027) is essential for growth of Corynebacterium glutamicum on D-lactate.</title>
        <authorList>
            <person name="Kato O."/>
            <person name="Youn J.W."/>
            <person name="Stansen K.C."/>
            <person name="Matsui D."/>
            <person name="Oikawa T."/>
            <person name="Wendisch V.F."/>
        </authorList>
    </citation>
    <scope>FUNCTION</scope>
    <scope>CATALYTIC ACTIVITY</scope>
    <scope>COFACTOR</scope>
    <scope>BIOPHYSICOCHEMICAL PROPERTIES</scope>
    <scope>INDUCTION</scope>
    <scope>DISRUPTION PHENOTYPE</scope>
    <source>
        <strain>ATCC 13032 / DSM 20300 / JCM 1318 / BCRC 11384 / CCUG 27702 / LMG 3730 / NBRC 12168 / NCIMB 10025 / NRRL B-2784 / 534</strain>
    </source>
</reference>
<keyword id="KW-1003">Cell membrane</keyword>
<keyword id="KW-0274">FAD</keyword>
<keyword id="KW-0285">Flavoprotein</keyword>
<keyword id="KW-0472">Membrane</keyword>
<keyword id="KW-0560">Oxidoreductase</keyword>
<keyword id="KW-0874">Quinone</keyword>
<keyword id="KW-1185">Reference proteome</keyword>
<gene>
    <name evidence="1 3" type="primary">dld</name>
    <name evidence="5" type="ordered locus">Cgl0901</name>
</gene>
<proteinExistence type="evidence at protein level"/>
<organism>
    <name type="scientific">Corynebacterium glutamicum (strain ATCC 13032 / DSM 20300 / JCM 1318 / BCRC 11384 / CCUG 27702 / LMG 3730 / NBRC 12168 / NCIMB 10025 / NRRL B-2784 / 534)</name>
    <dbReference type="NCBI Taxonomy" id="196627"/>
    <lineage>
        <taxon>Bacteria</taxon>
        <taxon>Bacillati</taxon>
        <taxon>Actinomycetota</taxon>
        <taxon>Actinomycetes</taxon>
        <taxon>Mycobacteriales</taxon>
        <taxon>Corynebacteriaceae</taxon>
        <taxon>Corynebacterium</taxon>
    </lineage>
</organism>
<comment type="function">
    <text evidence="2">Catalyzes the oxidation of D-lactate to pyruvate. Also has weak activity with L-lactate and DL-2-hydroxybutyrate. Electrons derived from D-lactate oxidation enter the electron transport chain. Essential for growth with D-lactate as sole carbon and energy source.</text>
</comment>
<comment type="catalytic activity">
    <reaction evidence="1 2">
        <text>(R)-lactate + a quinone = a quinol + pyruvate</text>
        <dbReference type="Rhea" id="RHEA:51468"/>
        <dbReference type="ChEBI" id="CHEBI:15361"/>
        <dbReference type="ChEBI" id="CHEBI:16004"/>
        <dbReference type="ChEBI" id="CHEBI:24646"/>
        <dbReference type="ChEBI" id="CHEBI:132124"/>
        <dbReference type="EC" id="1.1.5.12"/>
    </reaction>
</comment>
<comment type="cofactor">
    <cofactor evidence="1 2">
        <name>FAD</name>
        <dbReference type="ChEBI" id="CHEBI:57692"/>
    </cofactor>
</comment>
<comment type="biophysicochemical properties">
    <kinetics>
        <KM evidence="2">0.62 mM for D-lactate</KM>
        <Vmax evidence="2">73.5 umol/min/mg enzyme</Vmax>
    </kinetics>
    <phDependence>
        <text evidence="2">Optimum pH is 7.0.</text>
    </phDependence>
    <temperatureDependence>
        <text evidence="2">Optimum temperature is 45 degrees Celsius.</text>
    </temperatureDependence>
</comment>
<comment type="subcellular location">
    <subcellularLocation>
        <location evidence="1">Cell membrane</location>
        <topology evidence="1">Peripheral membrane protein</topology>
        <orientation evidence="1">Cytoplasmic side</orientation>
    </subcellularLocation>
</comment>
<comment type="induction">
    <text evidence="2">Constitutively expressed.</text>
</comment>
<comment type="disruption phenotype">
    <text evidence="2">Inactivation results in the loss of the ability to grow with D-lactate.</text>
</comment>
<comment type="similarity">
    <text evidence="1 4">Belongs to the quinone-dependent D-lactate dehydrogenase family.</text>
</comment>
<name>DLD_CORGL</name>